<reference key="1">
    <citation type="journal article" date="2008" name="J. Biotechnol.">
        <title>The lifestyle of Corynebacterium urealyticum derived from its complete genome sequence established by pyrosequencing.</title>
        <authorList>
            <person name="Tauch A."/>
            <person name="Trost E."/>
            <person name="Tilker A."/>
            <person name="Ludewig U."/>
            <person name="Schneiker S."/>
            <person name="Goesmann A."/>
            <person name="Arnold W."/>
            <person name="Bekel T."/>
            <person name="Brinkrolf K."/>
            <person name="Brune I."/>
            <person name="Goetker S."/>
            <person name="Kalinowski J."/>
            <person name="Kamp P.-B."/>
            <person name="Lobo F.P."/>
            <person name="Viehoever P."/>
            <person name="Weisshaar B."/>
            <person name="Soriano F."/>
            <person name="Droege M."/>
            <person name="Puehler A."/>
        </authorList>
    </citation>
    <scope>NUCLEOTIDE SEQUENCE [LARGE SCALE GENOMIC DNA]</scope>
    <source>
        <strain>ATCC 43042 / DSM 7109</strain>
    </source>
</reference>
<feature type="chain" id="PRO_1000114327" description="Protein RecA">
    <location>
        <begin position="1"/>
        <end position="371"/>
    </location>
</feature>
<feature type="region of interest" description="Disordered" evidence="2">
    <location>
        <begin position="343"/>
        <end position="371"/>
    </location>
</feature>
<feature type="binding site" evidence="1">
    <location>
        <begin position="75"/>
        <end position="82"/>
    </location>
    <ligand>
        <name>ATP</name>
        <dbReference type="ChEBI" id="CHEBI:30616"/>
    </ligand>
</feature>
<protein>
    <recommendedName>
        <fullName evidence="1">Protein RecA</fullName>
    </recommendedName>
    <alternativeName>
        <fullName evidence="1">Recombinase A</fullName>
    </alternativeName>
</protein>
<name>RECA_CORU7</name>
<keyword id="KW-0067">ATP-binding</keyword>
<keyword id="KW-0963">Cytoplasm</keyword>
<keyword id="KW-0227">DNA damage</keyword>
<keyword id="KW-0233">DNA recombination</keyword>
<keyword id="KW-0234">DNA repair</keyword>
<keyword id="KW-0238">DNA-binding</keyword>
<keyword id="KW-0547">Nucleotide-binding</keyword>
<keyword id="KW-1185">Reference proteome</keyword>
<keyword id="KW-0742">SOS response</keyword>
<organism>
    <name type="scientific">Corynebacterium urealyticum (strain ATCC 43042 / DSM 7109)</name>
    <dbReference type="NCBI Taxonomy" id="504474"/>
    <lineage>
        <taxon>Bacteria</taxon>
        <taxon>Bacillati</taxon>
        <taxon>Actinomycetota</taxon>
        <taxon>Actinomycetes</taxon>
        <taxon>Mycobacteriales</taxon>
        <taxon>Corynebacteriaceae</taxon>
        <taxon>Corynebacterium</taxon>
    </lineage>
</organism>
<evidence type="ECO:0000255" key="1">
    <source>
        <dbReference type="HAMAP-Rule" id="MF_00268"/>
    </source>
</evidence>
<evidence type="ECO:0000256" key="2">
    <source>
        <dbReference type="SAM" id="MobiDB-lite"/>
    </source>
</evidence>
<gene>
    <name evidence="1" type="primary">recA</name>
    <name type="ordered locus">cu0874</name>
</gene>
<proteinExistence type="inferred from homology"/>
<comment type="function">
    <text evidence="1">Can catalyze the hydrolysis of ATP in the presence of single-stranded DNA, the ATP-dependent uptake of single-stranded DNA by duplex DNA, and the ATP-dependent hybridization of homologous single-stranded DNAs. It interacts with LexA causing its activation and leading to its autocatalytic cleavage.</text>
</comment>
<comment type="subcellular location">
    <subcellularLocation>
        <location evidence="1">Cytoplasm</location>
    </subcellularLocation>
</comment>
<comment type="similarity">
    <text evidence="1">Belongs to the RecA family.</text>
</comment>
<dbReference type="EMBL" id="AM942444">
    <property type="protein sequence ID" value="CAQ04834.1"/>
    <property type="molecule type" value="Genomic_DNA"/>
</dbReference>
<dbReference type="RefSeq" id="WP_012360123.1">
    <property type="nucleotide sequence ID" value="NC_010545.1"/>
</dbReference>
<dbReference type="SMR" id="B1VDD6"/>
<dbReference type="STRING" id="504474.cu0874"/>
<dbReference type="GeneID" id="60603650"/>
<dbReference type="KEGG" id="cur:cu0874"/>
<dbReference type="eggNOG" id="COG0468">
    <property type="taxonomic scope" value="Bacteria"/>
</dbReference>
<dbReference type="HOGENOM" id="CLU_040469_3_2_11"/>
<dbReference type="Proteomes" id="UP000001727">
    <property type="component" value="Chromosome"/>
</dbReference>
<dbReference type="GO" id="GO:0005829">
    <property type="term" value="C:cytosol"/>
    <property type="evidence" value="ECO:0007669"/>
    <property type="project" value="TreeGrafter"/>
</dbReference>
<dbReference type="GO" id="GO:0005524">
    <property type="term" value="F:ATP binding"/>
    <property type="evidence" value="ECO:0007669"/>
    <property type="project" value="UniProtKB-UniRule"/>
</dbReference>
<dbReference type="GO" id="GO:0016887">
    <property type="term" value="F:ATP hydrolysis activity"/>
    <property type="evidence" value="ECO:0007669"/>
    <property type="project" value="InterPro"/>
</dbReference>
<dbReference type="GO" id="GO:0140664">
    <property type="term" value="F:ATP-dependent DNA damage sensor activity"/>
    <property type="evidence" value="ECO:0007669"/>
    <property type="project" value="InterPro"/>
</dbReference>
<dbReference type="GO" id="GO:0003684">
    <property type="term" value="F:damaged DNA binding"/>
    <property type="evidence" value="ECO:0007669"/>
    <property type="project" value="UniProtKB-UniRule"/>
</dbReference>
<dbReference type="GO" id="GO:0003697">
    <property type="term" value="F:single-stranded DNA binding"/>
    <property type="evidence" value="ECO:0007669"/>
    <property type="project" value="UniProtKB-UniRule"/>
</dbReference>
<dbReference type="GO" id="GO:0006310">
    <property type="term" value="P:DNA recombination"/>
    <property type="evidence" value="ECO:0007669"/>
    <property type="project" value="UniProtKB-UniRule"/>
</dbReference>
<dbReference type="GO" id="GO:0006281">
    <property type="term" value="P:DNA repair"/>
    <property type="evidence" value="ECO:0007669"/>
    <property type="project" value="UniProtKB-UniRule"/>
</dbReference>
<dbReference type="GO" id="GO:0009432">
    <property type="term" value="P:SOS response"/>
    <property type="evidence" value="ECO:0007669"/>
    <property type="project" value="UniProtKB-UniRule"/>
</dbReference>
<dbReference type="CDD" id="cd00983">
    <property type="entry name" value="RecA"/>
    <property type="match status" value="1"/>
</dbReference>
<dbReference type="FunFam" id="3.40.50.300:FF:000087">
    <property type="entry name" value="Recombinase RecA"/>
    <property type="match status" value="1"/>
</dbReference>
<dbReference type="Gene3D" id="3.40.50.300">
    <property type="entry name" value="P-loop containing nucleotide triphosphate hydrolases"/>
    <property type="match status" value="1"/>
</dbReference>
<dbReference type="HAMAP" id="MF_00268">
    <property type="entry name" value="RecA"/>
    <property type="match status" value="1"/>
</dbReference>
<dbReference type="InterPro" id="IPR003593">
    <property type="entry name" value="AAA+_ATPase"/>
</dbReference>
<dbReference type="InterPro" id="IPR013765">
    <property type="entry name" value="DNA_recomb/repair_RecA"/>
</dbReference>
<dbReference type="InterPro" id="IPR020584">
    <property type="entry name" value="DNA_recomb/repair_RecA_CS"/>
</dbReference>
<dbReference type="InterPro" id="IPR027417">
    <property type="entry name" value="P-loop_NTPase"/>
</dbReference>
<dbReference type="InterPro" id="IPR049261">
    <property type="entry name" value="RecA-like_C"/>
</dbReference>
<dbReference type="InterPro" id="IPR049428">
    <property type="entry name" value="RecA-like_N"/>
</dbReference>
<dbReference type="InterPro" id="IPR020588">
    <property type="entry name" value="RecA_ATP-bd"/>
</dbReference>
<dbReference type="InterPro" id="IPR023400">
    <property type="entry name" value="RecA_C_sf"/>
</dbReference>
<dbReference type="InterPro" id="IPR020587">
    <property type="entry name" value="RecA_monomer-monomer_interface"/>
</dbReference>
<dbReference type="NCBIfam" id="TIGR02012">
    <property type="entry name" value="tigrfam_recA"/>
    <property type="match status" value="1"/>
</dbReference>
<dbReference type="PANTHER" id="PTHR45900:SF1">
    <property type="entry name" value="MITOCHONDRIAL DNA REPAIR PROTEIN RECA HOMOLOG-RELATED"/>
    <property type="match status" value="1"/>
</dbReference>
<dbReference type="PANTHER" id="PTHR45900">
    <property type="entry name" value="RECA"/>
    <property type="match status" value="1"/>
</dbReference>
<dbReference type="Pfam" id="PF00154">
    <property type="entry name" value="RecA"/>
    <property type="match status" value="1"/>
</dbReference>
<dbReference type="Pfam" id="PF21096">
    <property type="entry name" value="RecA_C"/>
    <property type="match status" value="1"/>
</dbReference>
<dbReference type="PRINTS" id="PR00142">
    <property type="entry name" value="RECA"/>
</dbReference>
<dbReference type="SMART" id="SM00382">
    <property type="entry name" value="AAA"/>
    <property type="match status" value="1"/>
</dbReference>
<dbReference type="SUPFAM" id="SSF52540">
    <property type="entry name" value="P-loop containing nucleoside triphosphate hydrolases"/>
    <property type="match status" value="1"/>
</dbReference>
<dbReference type="SUPFAM" id="SSF54752">
    <property type="entry name" value="RecA protein, C-terminal domain"/>
    <property type="match status" value="1"/>
</dbReference>
<dbReference type="PROSITE" id="PS00321">
    <property type="entry name" value="RECA_1"/>
    <property type="match status" value="1"/>
</dbReference>
<dbReference type="PROSITE" id="PS50162">
    <property type="entry name" value="RECA_2"/>
    <property type="match status" value="1"/>
</dbReference>
<dbReference type="PROSITE" id="PS50163">
    <property type="entry name" value="RECA_3"/>
    <property type="match status" value="1"/>
</dbReference>
<sequence length="371" mass="39853">MAPKKKATTAAQKDRSKALDLAMAQIEKDFGKGAIMRLGDENRPPISAIPSGNIAINVALGIGGFPRGRVVEIYGPESSGKTTVALHAIAEAQKGGGIAAFIDAEHALDPEYAKALGVDTDALLVSQPDTGEQALEIADMLVRSGAIDMVVIDSVAALTPKAEIDGEMGDSHVGLQARLMSQALRKMTSALYQTGTTAIFINQLREKIGVMFGSPETTTGGKALKFYASVRCDIRRIQALKDGQDVVGNRTRLKIVKNKVSPPFKIAEFDILYGEGISREGSILDLGVDAGIIKKSGSWFTYEGEQLGQGKEKARDFLKSNPELAEQLDDRIMQELKVGPYAKAKDEPIADEDQPIDVVPNFDDQDVEPQN</sequence>
<accession>B1VDD6</accession>